<keyword id="KW-1185">Reference proteome</keyword>
<protein>
    <recommendedName>
        <fullName>Protein LE25</fullName>
    </recommendedName>
</protein>
<sequence length="88" mass="9258">MQTGKDAASAAKAGMEKTKANVQEKAERMTTRDPLKKEMATEKKEDRVAAAEMGKRDAKAQHAAEKQGAATTGTGTTGYGATGNHTTF</sequence>
<proteinExistence type="evidence at transcript level"/>
<evidence type="ECO:0000256" key="1">
    <source>
        <dbReference type="SAM" id="MobiDB-lite"/>
    </source>
</evidence>
<evidence type="ECO:0000305" key="2"/>
<comment type="tissue specificity">
    <text>Accumulates in developing seeds and drought-stressed leaves.</text>
</comment>
<comment type="induction">
    <text>By abscisic acid (ABA).</text>
</comment>
<comment type="similarity">
    <text evidence="2">Belongs to the LEA type 1 family.</text>
</comment>
<name>LE25_SOLLC</name>
<reference key="1">
    <citation type="journal article" date="1992" name="Plant Mol. Biol.">
        <title>Nucleotide sequence of an ABA-induced tomato gene that is expressed in wilted vegetative organs and developing seeds.</title>
        <authorList>
            <person name="Cohen A."/>
            <person name="Bray E.A."/>
        </authorList>
    </citation>
    <scope>NUCLEOTIDE SEQUENCE [GENOMIC DNA]</scope>
    <source>
        <strain>cv. Ailsa Craig</strain>
        <tissue>Leaf</tissue>
    </source>
</reference>
<dbReference type="EMBL" id="M76552">
    <property type="protein sequence ID" value="AAA34172.1"/>
    <property type="molecule type" value="Genomic_DNA"/>
</dbReference>
<dbReference type="PIR" id="S19253">
    <property type="entry name" value="S19253"/>
</dbReference>
<dbReference type="RefSeq" id="NP_001296314.1">
    <property type="nucleotide sequence ID" value="NM_001309385.1"/>
</dbReference>
<dbReference type="SMR" id="Q00747"/>
<dbReference type="STRING" id="4081.Q00747"/>
<dbReference type="PaxDb" id="4081-Solyc10g078770.1.1"/>
<dbReference type="EnsemblPlants" id="Solyc10g078770.2.1">
    <property type="protein sequence ID" value="Solyc10g078770.2.1"/>
    <property type="gene ID" value="Solyc10g078770.2"/>
</dbReference>
<dbReference type="GeneID" id="101253038"/>
<dbReference type="Gramene" id="Solyc10g078770.2.1">
    <property type="protein sequence ID" value="Solyc10g078770.2.1"/>
    <property type="gene ID" value="Solyc10g078770.2"/>
</dbReference>
<dbReference type="KEGG" id="sly:101253038"/>
<dbReference type="eggNOG" id="ENOG502T0C4">
    <property type="taxonomic scope" value="Eukaryota"/>
</dbReference>
<dbReference type="HOGENOM" id="CLU_180328_0_0_1"/>
<dbReference type="InParanoid" id="Q00747"/>
<dbReference type="OMA" id="TGDHTTF"/>
<dbReference type="OrthoDB" id="758082at2759"/>
<dbReference type="PhylomeDB" id="Q00747"/>
<dbReference type="Proteomes" id="UP000004994">
    <property type="component" value="Chromosome 10"/>
</dbReference>
<dbReference type="GO" id="GO:0009793">
    <property type="term" value="P:embryo development ending in seed dormancy"/>
    <property type="evidence" value="ECO:0007669"/>
    <property type="project" value="InterPro"/>
</dbReference>
<dbReference type="InterPro" id="IPR005513">
    <property type="entry name" value="LEA_1"/>
</dbReference>
<dbReference type="PANTHER" id="PTHR33493:SF2">
    <property type="entry name" value="LATE EMBRYOGENESIS ABUNDANT PROTEIN 46"/>
    <property type="match status" value="1"/>
</dbReference>
<dbReference type="PANTHER" id="PTHR33493">
    <property type="entry name" value="LATE EMBRYOGENESIS ABUNDANT PROTEIN 6-RELATED"/>
    <property type="match status" value="1"/>
</dbReference>
<dbReference type="Pfam" id="PF03760">
    <property type="entry name" value="LEA_1"/>
    <property type="match status" value="1"/>
</dbReference>
<feature type="chain" id="PRO_0000221242" description="Protein LE25">
    <location>
        <begin position="1"/>
        <end position="88"/>
    </location>
</feature>
<feature type="region of interest" description="Disordered" evidence="1">
    <location>
        <begin position="1"/>
        <end position="88"/>
    </location>
</feature>
<feature type="compositionally biased region" description="Basic and acidic residues" evidence="1">
    <location>
        <begin position="14"/>
        <end position="65"/>
    </location>
</feature>
<organism>
    <name type="scientific">Solanum lycopersicum</name>
    <name type="common">Tomato</name>
    <name type="synonym">Lycopersicon esculentum</name>
    <dbReference type="NCBI Taxonomy" id="4081"/>
    <lineage>
        <taxon>Eukaryota</taxon>
        <taxon>Viridiplantae</taxon>
        <taxon>Streptophyta</taxon>
        <taxon>Embryophyta</taxon>
        <taxon>Tracheophyta</taxon>
        <taxon>Spermatophyta</taxon>
        <taxon>Magnoliopsida</taxon>
        <taxon>eudicotyledons</taxon>
        <taxon>Gunneridae</taxon>
        <taxon>Pentapetalae</taxon>
        <taxon>asterids</taxon>
        <taxon>lamiids</taxon>
        <taxon>Solanales</taxon>
        <taxon>Solanaceae</taxon>
        <taxon>Solanoideae</taxon>
        <taxon>Solaneae</taxon>
        <taxon>Solanum</taxon>
        <taxon>Solanum subgen. Lycopersicon</taxon>
    </lineage>
</organism>
<gene>
    <name type="primary">LE25</name>
</gene>
<accession>Q00747</accession>